<keyword id="KW-1185">Reference proteome</keyword>
<gene>
    <name type="ordered locus">At4g22170</name>
    <name type="ORF">T10I14.7</name>
</gene>
<protein>
    <recommendedName>
        <fullName>Putative F-box protein At4g22170</fullName>
    </recommendedName>
</protein>
<comment type="sequence caution" evidence="2">
    <conflict type="erroneous gene model prediction">
        <sequence resource="EMBL-CDS" id="CAB52873"/>
    </conflict>
</comment>
<comment type="sequence caution" evidence="2">
    <conflict type="erroneous gene model prediction">
        <sequence resource="EMBL-CDS" id="CAB79172"/>
    </conflict>
</comment>
<reference key="1">
    <citation type="journal article" date="1999" name="Nature">
        <title>Sequence and analysis of chromosome 4 of the plant Arabidopsis thaliana.</title>
        <authorList>
            <person name="Mayer K.F.X."/>
            <person name="Schueller C."/>
            <person name="Wambutt R."/>
            <person name="Murphy G."/>
            <person name="Volckaert G."/>
            <person name="Pohl T."/>
            <person name="Duesterhoeft A."/>
            <person name="Stiekema W."/>
            <person name="Entian K.-D."/>
            <person name="Terryn N."/>
            <person name="Harris B."/>
            <person name="Ansorge W."/>
            <person name="Brandt P."/>
            <person name="Grivell L.A."/>
            <person name="Rieger M."/>
            <person name="Weichselgartner M."/>
            <person name="de Simone V."/>
            <person name="Obermaier B."/>
            <person name="Mache R."/>
            <person name="Mueller M."/>
            <person name="Kreis M."/>
            <person name="Delseny M."/>
            <person name="Puigdomenech P."/>
            <person name="Watson M."/>
            <person name="Schmidtheini T."/>
            <person name="Reichert B."/>
            <person name="Portetelle D."/>
            <person name="Perez-Alonso M."/>
            <person name="Boutry M."/>
            <person name="Bancroft I."/>
            <person name="Vos P."/>
            <person name="Hoheisel J."/>
            <person name="Zimmermann W."/>
            <person name="Wedler H."/>
            <person name="Ridley P."/>
            <person name="Langham S.-A."/>
            <person name="McCullagh B."/>
            <person name="Bilham L."/>
            <person name="Robben J."/>
            <person name="van der Schueren J."/>
            <person name="Grymonprez B."/>
            <person name="Chuang Y.-J."/>
            <person name="Vandenbussche F."/>
            <person name="Braeken M."/>
            <person name="Weltjens I."/>
            <person name="Voet M."/>
            <person name="Bastiaens I."/>
            <person name="Aert R."/>
            <person name="Defoor E."/>
            <person name="Weitzenegger T."/>
            <person name="Bothe G."/>
            <person name="Ramsperger U."/>
            <person name="Hilbert H."/>
            <person name="Braun M."/>
            <person name="Holzer E."/>
            <person name="Brandt A."/>
            <person name="Peters S."/>
            <person name="van Staveren M."/>
            <person name="Dirkse W."/>
            <person name="Mooijman P."/>
            <person name="Klein Lankhorst R."/>
            <person name="Rose M."/>
            <person name="Hauf J."/>
            <person name="Koetter P."/>
            <person name="Berneiser S."/>
            <person name="Hempel S."/>
            <person name="Feldpausch M."/>
            <person name="Lamberth S."/>
            <person name="Van den Daele H."/>
            <person name="De Keyser A."/>
            <person name="Buysshaert C."/>
            <person name="Gielen J."/>
            <person name="Villarroel R."/>
            <person name="De Clercq R."/>
            <person name="van Montagu M."/>
            <person name="Rogers J."/>
            <person name="Cronin A."/>
            <person name="Quail M.A."/>
            <person name="Bray-Allen S."/>
            <person name="Clark L."/>
            <person name="Doggett J."/>
            <person name="Hall S."/>
            <person name="Kay M."/>
            <person name="Lennard N."/>
            <person name="McLay K."/>
            <person name="Mayes R."/>
            <person name="Pettett A."/>
            <person name="Rajandream M.A."/>
            <person name="Lyne M."/>
            <person name="Benes V."/>
            <person name="Rechmann S."/>
            <person name="Borkova D."/>
            <person name="Bloecker H."/>
            <person name="Scharfe M."/>
            <person name="Grimm M."/>
            <person name="Loehnert T.-H."/>
            <person name="Dose S."/>
            <person name="de Haan M."/>
            <person name="Maarse A.C."/>
            <person name="Schaefer M."/>
            <person name="Mueller-Auer S."/>
            <person name="Gabel C."/>
            <person name="Fuchs M."/>
            <person name="Fartmann B."/>
            <person name="Granderath K."/>
            <person name="Dauner D."/>
            <person name="Herzl A."/>
            <person name="Neumann S."/>
            <person name="Argiriou A."/>
            <person name="Vitale D."/>
            <person name="Liguori R."/>
            <person name="Piravandi E."/>
            <person name="Massenet O."/>
            <person name="Quigley F."/>
            <person name="Clabauld G."/>
            <person name="Muendlein A."/>
            <person name="Felber R."/>
            <person name="Schnabl S."/>
            <person name="Hiller R."/>
            <person name="Schmidt W."/>
            <person name="Lecharny A."/>
            <person name="Aubourg S."/>
            <person name="Chefdor F."/>
            <person name="Cooke R."/>
            <person name="Berger C."/>
            <person name="Monfort A."/>
            <person name="Casacuberta E."/>
            <person name="Gibbons T."/>
            <person name="Weber N."/>
            <person name="Vandenbol M."/>
            <person name="Bargues M."/>
            <person name="Terol J."/>
            <person name="Torres A."/>
            <person name="Perez-Perez A."/>
            <person name="Purnelle B."/>
            <person name="Bent E."/>
            <person name="Johnson S."/>
            <person name="Tacon D."/>
            <person name="Jesse T."/>
            <person name="Heijnen L."/>
            <person name="Schwarz S."/>
            <person name="Scholler P."/>
            <person name="Heber S."/>
            <person name="Francs P."/>
            <person name="Bielke C."/>
            <person name="Frishman D."/>
            <person name="Haase D."/>
            <person name="Lemcke K."/>
            <person name="Mewes H.-W."/>
            <person name="Stocker S."/>
            <person name="Zaccaria P."/>
            <person name="Bevan M."/>
            <person name="Wilson R.K."/>
            <person name="de la Bastide M."/>
            <person name="Habermann K."/>
            <person name="Parnell L."/>
            <person name="Dedhia N."/>
            <person name="Gnoj L."/>
            <person name="Schutz K."/>
            <person name="Huang E."/>
            <person name="Spiegel L."/>
            <person name="Sekhon M."/>
            <person name="Murray J."/>
            <person name="Sheet P."/>
            <person name="Cordes M."/>
            <person name="Abu-Threideh J."/>
            <person name="Stoneking T."/>
            <person name="Kalicki J."/>
            <person name="Graves T."/>
            <person name="Harmon G."/>
            <person name="Edwards J."/>
            <person name="Latreille P."/>
            <person name="Courtney L."/>
            <person name="Cloud J."/>
            <person name="Abbott A."/>
            <person name="Scott K."/>
            <person name="Johnson D."/>
            <person name="Minx P."/>
            <person name="Bentley D."/>
            <person name="Fulton B."/>
            <person name="Miller N."/>
            <person name="Greco T."/>
            <person name="Kemp K."/>
            <person name="Kramer J."/>
            <person name="Fulton L."/>
            <person name="Mardis E."/>
            <person name="Dante M."/>
            <person name="Pepin K."/>
            <person name="Hillier L.W."/>
            <person name="Nelson J."/>
            <person name="Spieth J."/>
            <person name="Ryan E."/>
            <person name="Andrews S."/>
            <person name="Geisel C."/>
            <person name="Layman D."/>
            <person name="Du H."/>
            <person name="Ali J."/>
            <person name="Berghoff A."/>
            <person name="Jones K."/>
            <person name="Drone K."/>
            <person name="Cotton M."/>
            <person name="Joshu C."/>
            <person name="Antonoiu B."/>
            <person name="Zidanic M."/>
            <person name="Strong C."/>
            <person name="Sun H."/>
            <person name="Lamar B."/>
            <person name="Yordan C."/>
            <person name="Ma P."/>
            <person name="Zhong J."/>
            <person name="Preston R."/>
            <person name="Vil D."/>
            <person name="Shekher M."/>
            <person name="Matero A."/>
            <person name="Shah R."/>
            <person name="Swaby I.K."/>
            <person name="O'Shaughnessy A."/>
            <person name="Rodriguez M."/>
            <person name="Hoffman J."/>
            <person name="Till S."/>
            <person name="Granat S."/>
            <person name="Shohdy N."/>
            <person name="Hasegawa A."/>
            <person name="Hameed A."/>
            <person name="Lodhi M."/>
            <person name="Johnson A."/>
            <person name="Chen E."/>
            <person name="Marra M.A."/>
            <person name="Martienssen R."/>
            <person name="McCombie W.R."/>
        </authorList>
    </citation>
    <scope>NUCLEOTIDE SEQUENCE [LARGE SCALE GENOMIC DNA]</scope>
    <source>
        <strain>cv. Columbia</strain>
    </source>
</reference>
<reference key="2">
    <citation type="journal article" date="2017" name="Plant J.">
        <title>Araport11: a complete reannotation of the Arabidopsis thaliana reference genome.</title>
        <authorList>
            <person name="Cheng C.Y."/>
            <person name="Krishnakumar V."/>
            <person name="Chan A.P."/>
            <person name="Thibaud-Nissen F."/>
            <person name="Schobel S."/>
            <person name="Town C.D."/>
        </authorList>
    </citation>
    <scope>GENOME REANNOTATION</scope>
    <source>
        <strain>cv. Columbia</strain>
    </source>
</reference>
<feature type="chain" id="PRO_0000283508" description="Putative F-box protein At4g22170">
    <location>
        <begin position="1"/>
        <end position="363"/>
    </location>
</feature>
<feature type="domain" description="F-box" evidence="1">
    <location>
        <begin position="7"/>
        <end position="58"/>
    </location>
</feature>
<accession>Q9SUG4</accession>
<accession>F4JL33</accession>
<proteinExistence type="predicted"/>
<organism>
    <name type="scientific">Arabidopsis thaliana</name>
    <name type="common">Mouse-ear cress</name>
    <dbReference type="NCBI Taxonomy" id="3702"/>
    <lineage>
        <taxon>Eukaryota</taxon>
        <taxon>Viridiplantae</taxon>
        <taxon>Streptophyta</taxon>
        <taxon>Embryophyta</taxon>
        <taxon>Tracheophyta</taxon>
        <taxon>Spermatophyta</taxon>
        <taxon>Magnoliopsida</taxon>
        <taxon>eudicotyledons</taxon>
        <taxon>Gunneridae</taxon>
        <taxon>Pentapetalae</taxon>
        <taxon>rosids</taxon>
        <taxon>malvids</taxon>
        <taxon>Brassicales</taxon>
        <taxon>Brassicaceae</taxon>
        <taxon>Camelineae</taxon>
        <taxon>Arabidopsis</taxon>
    </lineage>
</organism>
<name>FB241_ARATH</name>
<sequence length="363" mass="42908">MERKHNPNSWSDLPHDLLNLVFERLSFANFNRARSVCSSWYSASRQSVPKNQIHWLILFPEDNNNKNNSSCTLFNPDEKDKLYKTQHLDEEFAKSVCRATYGSWFLMVDPLFNLYILNLFTRERINLHPVELLWKDYELGVSSRNRMKSRGGNVRSPVFWIDEITKDYVVLWGLRDWCVFYSKKGDTSWNQIPQTPDCYRLRYKDHKLYFQGYFSSFKIFDLSGEIPQQTFDSLVFVDHCHFRRWVLYSTLVVTLTGKVLNVEKMMDCSFTVFEVCSSGRRIHSLGDESILLEQGITVLANDTNGFIRNSIYFNNDCENIEKHTYDMFIFNLETQKTEPLHTFDSSSFQFSRAHWFVPSFTLT</sequence>
<evidence type="ECO:0000255" key="1">
    <source>
        <dbReference type="PROSITE-ProRule" id="PRU00080"/>
    </source>
</evidence>
<evidence type="ECO:0000305" key="2"/>
<dbReference type="EMBL" id="AL021712">
    <property type="protein sequence ID" value="CAB52873.1"/>
    <property type="status" value="ALT_SEQ"/>
    <property type="molecule type" value="Genomic_DNA"/>
</dbReference>
<dbReference type="EMBL" id="AL161556">
    <property type="protein sequence ID" value="CAB79172.1"/>
    <property type="status" value="ALT_SEQ"/>
    <property type="molecule type" value="Genomic_DNA"/>
</dbReference>
<dbReference type="EMBL" id="CP002687">
    <property type="protein sequence ID" value="AEE84568.1"/>
    <property type="molecule type" value="Genomic_DNA"/>
</dbReference>
<dbReference type="PIR" id="F85253">
    <property type="entry name" value="F85253"/>
</dbReference>
<dbReference type="RefSeq" id="NP_567648.1">
    <property type="nucleotide sequence ID" value="NM_118339.2"/>
</dbReference>
<dbReference type="FunCoup" id="Q9SUG4">
    <property type="interactions" value="31"/>
</dbReference>
<dbReference type="PaxDb" id="3702-AT4G22170.1"/>
<dbReference type="EnsemblPlants" id="AT4G22170.1">
    <property type="protein sequence ID" value="AT4G22170.1"/>
    <property type="gene ID" value="AT4G22170"/>
</dbReference>
<dbReference type="GeneID" id="828307"/>
<dbReference type="Gramene" id="AT4G22170.1">
    <property type="protein sequence ID" value="AT4G22170.1"/>
    <property type="gene ID" value="AT4G22170"/>
</dbReference>
<dbReference type="KEGG" id="ath:AT4G22170"/>
<dbReference type="Araport" id="AT4G22170"/>
<dbReference type="TAIR" id="AT4G22170">
    <property type="gene designation" value="ATFDB31"/>
</dbReference>
<dbReference type="HOGENOM" id="CLU_019286_7_1_1"/>
<dbReference type="InParanoid" id="Q9SUG4"/>
<dbReference type="OMA" id="MFIFNLE"/>
<dbReference type="PRO" id="PR:Q9SUG4"/>
<dbReference type="Proteomes" id="UP000006548">
    <property type="component" value="Chromosome 4"/>
</dbReference>
<dbReference type="ExpressionAtlas" id="Q9SUG4">
    <property type="expression patterns" value="baseline and differential"/>
</dbReference>
<dbReference type="CDD" id="cd09917">
    <property type="entry name" value="F-box_SF"/>
    <property type="match status" value="1"/>
</dbReference>
<dbReference type="Gene3D" id="1.20.1280.50">
    <property type="match status" value="1"/>
</dbReference>
<dbReference type="InterPro" id="IPR036047">
    <property type="entry name" value="F-box-like_dom_sf"/>
</dbReference>
<dbReference type="InterPro" id="IPR050942">
    <property type="entry name" value="F-box_BR-signaling"/>
</dbReference>
<dbReference type="InterPro" id="IPR001810">
    <property type="entry name" value="F-box_dom"/>
</dbReference>
<dbReference type="InterPro" id="IPR005174">
    <property type="entry name" value="KIB1-4_b-propeller"/>
</dbReference>
<dbReference type="PANTHER" id="PTHR44259:SF26">
    <property type="entry name" value="F-BOX FAMILY PROTEIN-LIKE PROTEIN"/>
    <property type="match status" value="1"/>
</dbReference>
<dbReference type="PANTHER" id="PTHR44259">
    <property type="entry name" value="OS07G0183000 PROTEIN-RELATED"/>
    <property type="match status" value="1"/>
</dbReference>
<dbReference type="Pfam" id="PF03478">
    <property type="entry name" value="Beta-prop_KIB1-4"/>
    <property type="match status" value="1"/>
</dbReference>
<dbReference type="Pfam" id="PF00646">
    <property type="entry name" value="F-box"/>
    <property type="match status" value="1"/>
</dbReference>
<dbReference type="SMART" id="SM00256">
    <property type="entry name" value="FBOX"/>
    <property type="match status" value="1"/>
</dbReference>
<dbReference type="SUPFAM" id="SSF81383">
    <property type="entry name" value="F-box domain"/>
    <property type="match status" value="1"/>
</dbReference>
<dbReference type="PROSITE" id="PS50181">
    <property type="entry name" value="FBOX"/>
    <property type="match status" value="1"/>
</dbReference>